<sequence length="352" mass="39425">MKSLVLLVALLLWSSSVPAYPSITVSPDEEQNLNHYIQVLENLVLSVPPKEPGREKKSNSPKHVYSIASKGSKFKELITHGDTSTENDVLTNPISEETTTFPTGDFTPEIGMKKHMESTPFWSIKPNNVSIVLHAEEPYIEKEEPEPEPEPTARQTEAPRTLPVVTESSTSPYVTSYKSPVTTSDRSTGIEISTESEDVPQLSGETAIEKSKELTFGKHPESWNNDDILKKILDINSQVQQALLSDTSNPAYREDIEASKEHLKRSLALAAAAEHKLETMYKSQLLSPGQTSNKIDDIETVINMLCNSRSKLYEYLDIKYVPPEMREEAATVFNTLKNMCRSRRVTALLKVY</sequence>
<name>SPESP_MACFA</name>
<dbReference type="EMBL" id="AB072796">
    <property type="protein sequence ID" value="BAB69765.1"/>
    <property type="molecule type" value="mRNA"/>
</dbReference>
<dbReference type="RefSeq" id="NP_001274210.1">
    <property type="nucleotide sequence ID" value="NM_001287281.1"/>
</dbReference>
<dbReference type="RefSeq" id="XP_045251588.1">
    <property type="nucleotide sequence ID" value="XM_045395653.2"/>
</dbReference>
<dbReference type="SMR" id="Q95LJ2"/>
<dbReference type="STRING" id="9541.ENSMFAP00000022589"/>
<dbReference type="GlyCosmos" id="Q95LJ2">
    <property type="glycosylation" value="1 site, No reported glycans"/>
</dbReference>
<dbReference type="Ensembl" id="ENSMFAT00000030723.2">
    <property type="protein sequence ID" value="ENSMFAP00000022594.2"/>
    <property type="gene ID" value="ENSMFAG00000043000.2"/>
</dbReference>
<dbReference type="GeneID" id="102127931"/>
<dbReference type="VEuPathDB" id="HostDB:ENSMFAG00000043000"/>
<dbReference type="eggNOG" id="ENOG502SG7W">
    <property type="taxonomic scope" value="Eukaryota"/>
</dbReference>
<dbReference type="GeneTree" id="ENSGT00390000005362"/>
<dbReference type="OMA" id="TESTAFW"/>
<dbReference type="Proteomes" id="UP000233100">
    <property type="component" value="Chromosome 7"/>
</dbReference>
<dbReference type="Bgee" id="ENSMFAG00000043000">
    <property type="expression patterns" value="Expressed in skeletal muscle tissue and 13 other cell types or tissues"/>
</dbReference>
<dbReference type="GO" id="GO:0001669">
    <property type="term" value="C:acrosomal vesicle"/>
    <property type="evidence" value="ECO:0007669"/>
    <property type="project" value="UniProtKB-SubCell"/>
</dbReference>
<dbReference type="GO" id="GO:0045171">
    <property type="term" value="C:intercellular bridge"/>
    <property type="evidence" value="ECO:0007669"/>
    <property type="project" value="Ensembl"/>
</dbReference>
<dbReference type="GO" id="GO:0072686">
    <property type="term" value="C:mitotic spindle"/>
    <property type="evidence" value="ECO:0007669"/>
    <property type="project" value="Ensembl"/>
</dbReference>
<dbReference type="GO" id="GO:0007340">
    <property type="term" value="P:acrosome reaction"/>
    <property type="evidence" value="ECO:0007669"/>
    <property type="project" value="InterPro"/>
</dbReference>
<dbReference type="GO" id="GO:0009566">
    <property type="term" value="P:fertilization"/>
    <property type="evidence" value="ECO:0000250"/>
    <property type="project" value="UniProtKB"/>
</dbReference>
<dbReference type="GO" id="GO:0007342">
    <property type="term" value="P:fusion of sperm to egg plasma membrane involved in single fertilization"/>
    <property type="evidence" value="ECO:0007669"/>
    <property type="project" value="InterPro"/>
</dbReference>
<dbReference type="GO" id="GO:0035036">
    <property type="term" value="P:sperm-egg recognition"/>
    <property type="evidence" value="ECO:0000250"/>
    <property type="project" value="UniProtKB"/>
</dbReference>
<dbReference type="InterPro" id="IPR026743">
    <property type="entry name" value="Equatorial_segment"/>
</dbReference>
<dbReference type="PANTHER" id="PTHR31667">
    <property type="entry name" value="SPERM EQUATORIAL SEGMENT PROTEIN 1"/>
    <property type="match status" value="1"/>
</dbReference>
<dbReference type="PANTHER" id="PTHR31667:SF2">
    <property type="entry name" value="SPERM EQUATORIAL SEGMENT PROTEIN 1"/>
    <property type="match status" value="1"/>
</dbReference>
<dbReference type="Pfam" id="PF15754">
    <property type="entry name" value="SPESP1"/>
    <property type="match status" value="1"/>
</dbReference>
<keyword id="KW-0968">Cytoplasmic vesicle</keyword>
<keyword id="KW-0217">Developmental protein</keyword>
<keyword id="KW-0325">Glycoprotein</keyword>
<keyword id="KW-1185">Reference proteome</keyword>
<keyword id="KW-0732">Signal</keyword>
<comment type="function">
    <text evidence="2">Involved in fertilization ability of sperm.</text>
</comment>
<comment type="subcellular location">
    <subcellularLocation>
        <location evidence="1">Cytoplasmic vesicle</location>
        <location evidence="1">Secretory vesicle</location>
        <location evidence="1">Acrosome</location>
    </subcellularLocation>
    <text evidence="1 2">Small proacrosomal granules (during the Golgi phase), enlarged acrosomal vesicles (during the cap phase), acrosome (during the elongating phase), equatorial segment of the acrosome (during the maturation phase) (By similarity). After acrosome reaction localizes to the equatorial segment region in both noncapacitated and capacitated, acrosome-reacted sperm (By similarity).</text>
</comment>
<comment type="PTM">
    <text evidence="2">Glycosylated. In testis there are two predominant forms of 77- and 67-kDa and a form of 47-kDa, whereas in epididymal sperm from caput, corpus, and cauda there are two forms of 47- and 43-kDa. Testis forms contain complex carbohydrate residues. Epididymal sperm forms are N-glycosylated. Then undergoes significant glycosylation in the testis and that the majority of these glycoconjugates are removed by the time sperm reach the caput epididymis.</text>
</comment>
<comment type="similarity">
    <text evidence="5">Belongs to the SPESP1 family.</text>
</comment>
<feature type="signal peptide" evidence="3">
    <location>
        <begin position="1"/>
        <end position="19"/>
    </location>
</feature>
<feature type="chain" id="PRO_0000042708" description="Sperm equatorial segment protein 1">
    <location>
        <begin position="20"/>
        <end position="352"/>
    </location>
</feature>
<feature type="region of interest" description="Disordered" evidence="4">
    <location>
        <begin position="140"/>
        <end position="203"/>
    </location>
</feature>
<feature type="compositionally biased region" description="Polar residues" evidence="4">
    <location>
        <begin position="166"/>
        <end position="193"/>
    </location>
</feature>
<feature type="glycosylation site" description="N-linked (GlcNAc...) asparagine" evidence="3">
    <location>
        <position position="128"/>
    </location>
</feature>
<gene>
    <name evidence="1" type="primary">SPESP1</name>
    <name type="ORF">QtsA-21536</name>
</gene>
<protein>
    <recommendedName>
        <fullName evidence="1">Sperm equatorial segment protein 1</fullName>
    </recommendedName>
</protein>
<reference key="1">
    <citation type="journal article" date="2002" name="BMC Genomics">
        <title>Cynomolgus monkey testicular cDNAs for discovery of novel human genes in the human genome sequence.</title>
        <authorList>
            <person name="Osada N."/>
            <person name="Hida M."/>
            <person name="Kusuda J."/>
            <person name="Tanuma R."/>
            <person name="Hirata M."/>
            <person name="Suto Y."/>
            <person name="Hirai M."/>
            <person name="Terao K."/>
            <person name="Sugano S."/>
            <person name="Hashimoto K."/>
        </authorList>
    </citation>
    <scope>NUCLEOTIDE SEQUENCE [LARGE SCALE MRNA]</scope>
    <source>
        <tissue>Testis</tissue>
    </source>
</reference>
<accession>Q95LJ2</accession>
<organism>
    <name type="scientific">Macaca fascicularis</name>
    <name type="common">Crab-eating macaque</name>
    <name type="synonym">Cynomolgus monkey</name>
    <dbReference type="NCBI Taxonomy" id="9541"/>
    <lineage>
        <taxon>Eukaryota</taxon>
        <taxon>Metazoa</taxon>
        <taxon>Chordata</taxon>
        <taxon>Craniata</taxon>
        <taxon>Vertebrata</taxon>
        <taxon>Euteleostomi</taxon>
        <taxon>Mammalia</taxon>
        <taxon>Eutheria</taxon>
        <taxon>Euarchontoglires</taxon>
        <taxon>Primates</taxon>
        <taxon>Haplorrhini</taxon>
        <taxon>Catarrhini</taxon>
        <taxon>Cercopithecidae</taxon>
        <taxon>Cercopithecinae</taxon>
        <taxon>Macaca</taxon>
    </lineage>
</organism>
<proteinExistence type="evidence at transcript level"/>
<evidence type="ECO:0000250" key="1">
    <source>
        <dbReference type="UniProtKB" id="Q6UW49"/>
    </source>
</evidence>
<evidence type="ECO:0000250" key="2">
    <source>
        <dbReference type="UniProtKB" id="Q9D5A0"/>
    </source>
</evidence>
<evidence type="ECO:0000255" key="3"/>
<evidence type="ECO:0000256" key="4">
    <source>
        <dbReference type="SAM" id="MobiDB-lite"/>
    </source>
</evidence>
<evidence type="ECO:0000305" key="5"/>